<dbReference type="EMBL" id="X12761">
    <property type="protein sequence ID" value="CAA31252.1"/>
    <property type="molecule type" value="mRNA"/>
</dbReference>
<dbReference type="EMBL" id="X12740">
    <property type="protein sequence ID" value="CAA31236.1"/>
    <property type="molecule type" value="mRNA"/>
</dbReference>
<dbReference type="EMBL" id="J04115">
    <property type="protein sequence ID" value="AAA37419.1"/>
    <property type="molecule type" value="mRNA"/>
</dbReference>
<dbReference type="EMBL" id="BC002081">
    <property type="protein sequence ID" value="AAH02081.1"/>
    <property type="molecule type" value="mRNA"/>
</dbReference>
<dbReference type="EMBL" id="BC021888">
    <property type="protein sequence ID" value="AAH21888.1"/>
    <property type="molecule type" value="mRNA"/>
</dbReference>
<dbReference type="CCDS" id="CCDS18364.1"/>
<dbReference type="PIR" id="A31345">
    <property type="entry name" value="TVMSJA"/>
</dbReference>
<dbReference type="RefSeq" id="NP_034721.1">
    <property type="nucleotide sequence ID" value="NM_010591.2"/>
</dbReference>
<dbReference type="BMRB" id="P05627"/>
<dbReference type="SMR" id="P05627"/>
<dbReference type="BioGRID" id="200871">
    <property type="interactions" value="46"/>
</dbReference>
<dbReference type="ComplexPortal" id="CPX-610">
    <property type="entry name" value="AP-1 transcription factor complex FOS-JUN-NFATC2"/>
</dbReference>
<dbReference type="ComplexPortal" id="CPX-611">
    <property type="entry name" value="bZIP transcription factor complex, Fos-Jun"/>
</dbReference>
<dbReference type="ComplexPortal" id="CPX-612">
    <property type="entry name" value="bZIP transcription factor complex, Jun-Jun"/>
</dbReference>
<dbReference type="DIP" id="DIP-1068N"/>
<dbReference type="ELM" id="P05627"/>
<dbReference type="FunCoup" id="P05627">
    <property type="interactions" value="2241"/>
</dbReference>
<dbReference type="IntAct" id="P05627">
    <property type="interactions" value="10"/>
</dbReference>
<dbReference type="MINT" id="P05627"/>
<dbReference type="STRING" id="10090.ENSMUSP00000102711"/>
<dbReference type="ChEMBL" id="CHEMBL5369"/>
<dbReference type="GlyGen" id="P05627">
    <property type="glycosylation" value="4 sites, 1 O-linked glycan (4 sites)"/>
</dbReference>
<dbReference type="iPTMnet" id="P05627"/>
<dbReference type="PhosphoSitePlus" id="P05627"/>
<dbReference type="jPOST" id="P05627"/>
<dbReference type="PaxDb" id="10090-ENSMUSP00000102711"/>
<dbReference type="PeptideAtlas" id="P05627"/>
<dbReference type="ProteomicsDB" id="301703"/>
<dbReference type="Pumba" id="P05627"/>
<dbReference type="Antibodypedia" id="3535">
    <property type="antibodies" value="3879 antibodies from 48 providers"/>
</dbReference>
<dbReference type="DNASU" id="16476"/>
<dbReference type="Ensembl" id="ENSMUST00000107094.2">
    <property type="protein sequence ID" value="ENSMUSP00000102711.2"/>
    <property type="gene ID" value="ENSMUSG00000052684.6"/>
</dbReference>
<dbReference type="GeneID" id="16476"/>
<dbReference type="KEGG" id="mmu:16476"/>
<dbReference type="UCSC" id="uc008tsq.2">
    <property type="organism name" value="mouse"/>
</dbReference>
<dbReference type="AGR" id="MGI:96646"/>
<dbReference type="CTD" id="3725"/>
<dbReference type="MGI" id="MGI:96646">
    <property type="gene designation" value="Jun"/>
</dbReference>
<dbReference type="VEuPathDB" id="HostDB:ENSMUSG00000052684"/>
<dbReference type="eggNOG" id="KOG0837">
    <property type="taxonomic scope" value="Eukaryota"/>
</dbReference>
<dbReference type="GeneTree" id="ENSGT00940000162061"/>
<dbReference type="HOGENOM" id="CLU_057007_0_0_1"/>
<dbReference type="InParanoid" id="P05627"/>
<dbReference type="OMA" id="HHQHMPA"/>
<dbReference type="OrthoDB" id="2187714at2759"/>
<dbReference type="PhylomeDB" id="P05627"/>
<dbReference type="TreeFam" id="TF323952"/>
<dbReference type="Reactome" id="R-MMU-2559580">
    <property type="pathway name" value="Oxidative Stress Induced Senescence"/>
</dbReference>
<dbReference type="Reactome" id="R-MMU-2871796">
    <property type="pathway name" value="FCERI mediated MAPK activation"/>
</dbReference>
<dbReference type="Reactome" id="R-MMU-450341">
    <property type="pathway name" value="Activation of the AP-1 family of transcription factors"/>
</dbReference>
<dbReference type="BioGRID-ORCS" id="16476">
    <property type="hits" value="10 hits in 83 CRISPR screens"/>
</dbReference>
<dbReference type="ChiTaRS" id="Jun">
    <property type="organism name" value="mouse"/>
</dbReference>
<dbReference type="PRO" id="PR:P05627"/>
<dbReference type="Proteomes" id="UP000000589">
    <property type="component" value="Chromosome 4"/>
</dbReference>
<dbReference type="RNAct" id="P05627">
    <property type="molecule type" value="protein"/>
</dbReference>
<dbReference type="Bgee" id="ENSMUSG00000052684">
    <property type="expression patterns" value="Expressed in endoderm of midgut and 302 other cell types or tissues"/>
</dbReference>
<dbReference type="ExpressionAtlas" id="P05627">
    <property type="expression patterns" value="baseline and differential"/>
</dbReference>
<dbReference type="GO" id="GO:0005829">
    <property type="term" value="C:cytosol"/>
    <property type="evidence" value="ECO:0000304"/>
    <property type="project" value="Reactome"/>
</dbReference>
<dbReference type="GO" id="GO:0000791">
    <property type="term" value="C:euchromatin"/>
    <property type="evidence" value="ECO:0007669"/>
    <property type="project" value="Ensembl"/>
</dbReference>
<dbReference type="GO" id="GO:0005654">
    <property type="term" value="C:nucleoplasm"/>
    <property type="evidence" value="ECO:0000304"/>
    <property type="project" value="Reactome"/>
</dbReference>
<dbReference type="GO" id="GO:0005634">
    <property type="term" value="C:nucleus"/>
    <property type="evidence" value="ECO:0000314"/>
    <property type="project" value="MGI"/>
</dbReference>
<dbReference type="GO" id="GO:0035976">
    <property type="term" value="C:transcription factor AP-1 complex"/>
    <property type="evidence" value="ECO:0000353"/>
    <property type="project" value="ComplexPortal"/>
</dbReference>
<dbReference type="GO" id="GO:0005667">
    <property type="term" value="C:transcription regulator complex"/>
    <property type="evidence" value="ECO:0000314"/>
    <property type="project" value="MGI"/>
</dbReference>
<dbReference type="GO" id="GO:0017053">
    <property type="term" value="C:transcription repressor complex"/>
    <property type="evidence" value="ECO:0000353"/>
    <property type="project" value="MGI"/>
</dbReference>
<dbReference type="GO" id="GO:0035497">
    <property type="term" value="F:cAMP response element binding"/>
    <property type="evidence" value="ECO:0007669"/>
    <property type="project" value="Ensembl"/>
</dbReference>
<dbReference type="GO" id="GO:0003682">
    <property type="term" value="F:chromatin binding"/>
    <property type="evidence" value="ECO:0000314"/>
    <property type="project" value="MGI"/>
</dbReference>
<dbReference type="GO" id="GO:0003677">
    <property type="term" value="F:DNA binding"/>
    <property type="evidence" value="ECO:0000314"/>
    <property type="project" value="MGI"/>
</dbReference>
<dbReference type="GO" id="GO:0001228">
    <property type="term" value="F:DNA-binding transcription activator activity, RNA polymerase II-specific"/>
    <property type="evidence" value="ECO:0000316"/>
    <property type="project" value="BHF-UCL"/>
</dbReference>
<dbReference type="GO" id="GO:0001227">
    <property type="term" value="F:DNA-binding transcription repressor activity, RNA polymerase II-specific"/>
    <property type="evidence" value="ECO:0007669"/>
    <property type="project" value="Ensembl"/>
</dbReference>
<dbReference type="GO" id="GO:0140296">
    <property type="term" value="F:general transcription initiation factor binding"/>
    <property type="evidence" value="ECO:0007669"/>
    <property type="project" value="Ensembl"/>
</dbReference>
<dbReference type="GO" id="GO:0005096">
    <property type="term" value="F:GTPase activator activity"/>
    <property type="evidence" value="ECO:0007669"/>
    <property type="project" value="Ensembl"/>
</dbReference>
<dbReference type="GO" id="GO:0071837">
    <property type="term" value="F:HMG box domain binding"/>
    <property type="evidence" value="ECO:0007669"/>
    <property type="project" value="Ensembl"/>
</dbReference>
<dbReference type="GO" id="GO:0042802">
    <property type="term" value="F:identical protein binding"/>
    <property type="evidence" value="ECO:0007669"/>
    <property type="project" value="Ensembl"/>
</dbReference>
<dbReference type="GO" id="GO:0044877">
    <property type="term" value="F:protein-containing complex binding"/>
    <property type="evidence" value="ECO:0007669"/>
    <property type="project" value="Ensembl"/>
</dbReference>
<dbReference type="GO" id="GO:0070412">
    <property type="term" value="F:R-SMAD binding"/>
    <property type="evidence" value="ECO:0007669"/>
    <property type="project" value="Ensembl"/>
</dbReference>
<dbReference type="GO" id="GO:0000978">
    <property type="term" value="F:RNA polymerase II cis-regulatory region sequence-specific DNA binding"/>
    <property type="evidence" value="ECO:0000314"/>
    <property type="project" value="BHF-UCL"/>
</dbReference>
<dbReference type="GO" id="GO:0061629">
    <property type="term" value="F:RNA polymerase II-specific DNA-binding transcription factor binding"/>
    <property type="evidence" value="ECO:0007669"/>
    <property type="project" value="Ensembl"/>
</dbReference>
<dbReference type="GO" id="GO:0000976">
    <property type="term" value="F:transcription cis-regulatory region binding"/>
    <property type="evidence" value="ECO:0000314"/>
    <property type="project" value="MGI"/>
</dbReference>
<dbReference type="GO" id="GO:0031625">
    <property type="term" value="F:ubiquitin protein ligase binding"/>
    <property type="evidence" value="ECO:0007669"/>
    <property type="project" value="Ensembl"/>
</dbReference>
<dbReference type="GO" id="GO:0001525">
    <property type="term" value="P:angiogenesis"/>
    <property type="evidence" value="ECO:0000315"/>
    <property type="project" value="MGI"/>
</dbReference>
<dbReference type="GO" id="GO:0006915">
    <property type="term" value="P:apoptotic process"/>
    <property type="evidence" value="ECO:0000315"/>
    <property type="project" value="MGI"/>
</dbReference>
<dbReference type="GO" id="GO:0031103">
    <property type="term" value="P:axon regeneration"/>
    <property type="evidence" value="ECO:0000315"/>
    <property type="project" value="MGI"/>
</dbReference>
<dbReference type="GO" id="GO:0008283">
    <property type="term" value="P:cell population proliferation"/>
    <property type="evidence" value="ECO:0000316"/>
    <property type="project" value="MGI"/>
</dbReference>
<dbReference type="GO" id="GO:0072740">
    <property type="term" value="P:cellular response to anisomycin"/>
    <property type="evidence" value="ECO:0000314"/>
    <property type="project" value="MGI"/>
</dbReference>
<dbReference type="GO" id="GO:0071277">
    <property type="term" value="P:cellular response to calcium ion"/>
    <property type="evidence" value="ECO:0000314"/>
    <property type="project" value="MGI"/>
</dbReference>
<dbReference type="GO" id="GO:0071456">
    <property type="term" value="P:cellular response to hypoxia"/>
    <property type="evidence" value="ECO:0007669"/>
    <property type="project" value="Ensembl"/>
</dbReference>
<dbReference type="GO" id="GO:0051365">
    <property type="term" value="P:cellular response to potassium ion starvation"/>
    <property type="evidence" value="ECO:0007669"/>
    <property type="project" value="Ensembl"/>
</dbReference>
<dbReference type="GO" id="GO:1990646">
    <property type="term" value="P:cellular response to prolactin"/>
    <property type="evidence" value="ECO:0007669"/>
    <property type="project" value="Ensembl"/>
</dbReference>
<dbReference type="GO" id="GO:0034224">
    <property type="term" value="P:cellular response to zinc ion starvation"/>
    <property type="evidence" value="ECO:0007669"/>
    <property type="project" value="Ensembl"/>
</dbReference>
<dbReference type="GO" id="GO:0007623">
    <property type="term" value="P:circadian rhythm"/>
    <property type="evidence" value="ECO:0007669"/>
    <property type="project" value="Ensembl"/>
</dbReference>
<dbReference type="GO" id="GO:0061029">
    <property type="term" value="P:eyelid development in camera-type eye"/>
    <property type="evidence" value="ECO:0000315"/>
    <property type="project" value="MGI"/>
</dbReference>
<dbReference type="GO" id="GO:0007254">
    <property type="term" value="P:JNK cascade"/>
    <property type="evidence" value="ECO:0000314"/>
    <property type="project" value="BHF-UCL"/>
</dbReference>
<dbReference type="GO" id="GO:0035026">
    <property type="term" value="P:leading edge cell differentiation"/>
    <property type="evidence" value="ECO:0000315"/>
    <property type="project" value="MGI"/>
</dbReference>
<dbReference type="GO" id="GO:0007612">
    <property type="term" value="P:learning"/>
    <property type="evidence" value="ECO:0007669"/>
    <property type="project" value="Ensembl"/>
</dbReference>
<dbReference type="GO" id="GO:0001889">
    <property type="term" value="P:liver development"/>
    <property type="evidence" value="ECO:0000315"/>
    <property type="project" value="MGI"/>
</dbReference>
<dbReference type="GO" id="GO:0051899">
    <property type="term" value="P:membrane depolarization"/>
    <property type="evidence" value="ECO:0007669"/>
    <property type="project" value="Ensembl"/>
</dbReference>
<dbReference type="GO" id="GO:0001774">
    <property type="term" value="P:microglial cell activation"/>
    <property type="evidence" value="ECO:0000315"/>
    <property type="project" value="MGI"/>
</dbReference>
<dbReference type="GO" id="GO:0030224">
    <property type="term" value="P:monocyte differentiation"/>
    <property type="evidence" value="ECO:0000315"/>
    <property type="project" value="MGI"/>
</dbReference>
<dbReference type="GO" id="GO:0043922">
    <property type="term" value="P:negative regulation by host of viral transcription"/>
    <property type="evidence" value="ECO:0007669"/>
    <property type="project" value="Ensembl"/>
</dbReference>
<dbReference type="GO" id="GO:0043066">
    <property type="term" value="P:negative regulation of apoptotic process"/>
    <property type="evidence" value="ECO:0000315"/>
    <property type="project" value="MGI"/>
</dbReference>
<dbReference type="GO" id="GO:0008285">
    <property type="term" value="P:negative regulation of cell population proliferation"/>
    <property type="evidence" value="ECO:0000316"/>
    <property type="project" value="MGI"/>
</dbReference>
<dbReference type="GO" id="GO:0043524">
    <property type="term" value="P:negative regulation of neuron apoptotic process"/>
    <property type="evidence" value="ECO:0000315"/>
    <property type="project" value="MGI"/>
</dbReference>
<dbReference type="GO" id="GO:0003151">
    <property type="term" value="P:outflow tract morphogenesis"/>
    <property type="evidence" value="ECO:0000315"/>
    <property type="project" value="MGI"/>
</dbReference>
<dbReference type="GO" id="GO:0043923">
    <property type="term" value="P:positive regulation by host of viral transcription"/>
    <property type="evidence" value="ECO:0007669"/>
    <property type="project" value="Ensembl"/>
</dbReference>
<dbReference type="GO" id="GO:2001235">
    <property type="term" value="P:positive regulation of apoptotic signaling pathway"/>
    <property type="evidence" value="ECO:0007669"/>
    <property type="project" value="Ensembl"/>
</dbReference>
<dbReference type="GO" id="GO:0045740">
    <property type="term" value="P:positive regulation of DNA replication"/>
    <property type="evidence" value="ECO:0007669"/>
    <property type="project" value="Ensembl"/>
</dbReference>
<dbReference type="GO" id="GO:2000144">
    <property type="term" value="P:positive regulation of DNA-templated transcription initiation"/>
    <property type="evidence" value="ECO:0007669"/>
    <property type="project" value="Ensembl"/>
</dbReference>
<dbReference type="GO" id="GO:0001938">
    <property type="term" value="P:positive regulation of endothelial cell proliferation"/>
    <property type="evidence" value="ECO:0000315"/>
    <property type="project" value="MGI"/>
</dbReference>
<dbReference type="GO" id="GO:0010634">
    <property type="term" value="P:positive regulation of epithelial cell migration"/>
    <property type="evidence" value="ECO:0000315"/>
    <property type="project" value="MGI"/>
</dbReference>
<dbReference type="GO" id="GO:0070374">
    <property type="term" value="P:positive regulation of ERK1 and ERK2 cascade"/>
    <property type="evidence" value="ECO:0000315"/>
    <property type="project" value="MGI"/>
</dbReference>
<dbReference type="GO" id="GO:0048146">
    <property type="term" value="P:positive regulation of fibroblast proliferation"/>
    <property type="evidence" value="ECO:0000314"/>
    <property type="project" value="MGI"/>
</dbReference>
<dbReference type="GO" id="GO:1902895">
    <property type="term" value="P:positive regulation of miRNA transcription"/>
    <property type="evidence" value="ECO:0007669"/>
    <property type="project" value="Ensembl"/>
</dbReference>
<dbReference type="GO" id="GO:0045657">
    <property type="term" value="P:positive regulation of monocyte differentiation"/>
    <property type="evidence" value="ECO:0007669"/>
    <property type="project" value="Ensembl"/>
</dbReference>
<dbReference type="GO" id="GO:0043525">
    <property type="term" value="P:positive regulation of neuron apoptotic process"/>
    <property type="evidence" value="ECO:0007669"/>
    <property type="project" value="Ensembl"/>
</dbReference>
<dbReference type="GO" id="GO:0045944">
    <property type="term" value="P:positive regulation of transcription by RNA polymerase II"/>
    <property type="evidence" value="ECO:0000314"/>
    <property type="project" value="MGI"/>
</dbReference>
<dbReference type="GO" id="GO:1904707">
    <property type="term" value="P:positive regulation of vascular associated smooth muscle cell proliferation"/>
    <property type="evidence" value="ECO:0007669"/>
    <property type="project" value="Ensembl"/>
</dbReference>
<dbReference type="GO" id="GO:0051726">
    <property type="term" value="P:regulation of cell cycle"/>
    <property type="evidence" value="ECO:0000315"/>
    <property type="project" value="MGI"/>
</dbReference>
<dbReference type="GO" id="GO:0006355">
    <property type="term" value="P:regulation of DNA-templated transcription"/>
    <property type="evidence" value="ECO:0000315"/>
    <property type="project" value="MGI"/>
</dbReference>
<dbReference type="GO" id="GO:0006357">
    <property type="term" value="P:regulation of transcription by RNA polymerase II"/>
    <property type="evidence" value="ECO:0000266"/>
    <property type="project" value="ComplexPortal"/>
</dbReference>
<dbReference type="GO" id="GO:0019046">
    <property type="term" value="P:release from viral latency"/>
    <property type="evidence" value="ECO:0007669"/>
    <property type="project" value="Ensembl"/>
</dbReference>
<dbReference type="GO" id="GO:0001836">
    <property type="term" value="P:release of cytochrome c from mitochondria"/>
    <property type="evidence" value="ECO:0007669"/>
    <property type="project" value="Ensembl"/>
</dbReference>
<dbReference type="GO" id="GO:0051591">
    <property type="term" value="P:response to cAMP"/>
    <property type="evidence" value="ECO:0007669"/>
    <property type="project" value="Ensembl"/>
</dbReference>
<dbReference type="GO" id="GO:0034097">
    <property type="term" value="P:response to cytokine"/>
    <property type="evidence" value="ECO:0007669"/>
    <property type="project" value="Ensembl"/>
</dbReference>
<dbReference type="GO" id="GO:0034976">
    <property type="term" value="P:response to endoplasmic reticulum stress"/>
    <property type="evidence" value="ECO:0007669"/>
    <property type="project" value="Ensembl"/>
</dbReference>
<dbReference type="GO" id="GO:0045471">
    <property type="term" value="P:response to ethanol"/>
    <property type="evidence" value="ECO:0007669"/>
    <property type="project" value="Ensembl"/>
</dbReference>
<dbReference type="GO" id="GO:0042542">
    <property type="term" value="P:response to hydrogen peroxide"/>
    <property type="evidence" value="ECO:0007669"/>
    <property type="project" value="Ensembl"/>
</dbReference>
<dbReference type="GO" id="GO:0032868">
    <property type="term" value="P:response to insulin"/>
    <property type="evidence" value="ECO:0007669"/>
    <property type="project" value="Ensembl"/>
</dbReference>
<dbReference type="GO" id="GO:0032496">
    <property type="term" value="P:response to lipopolysaccharide"/>
    <property type="evidence" value="ECO:0007669"/>
    <property type="project" value="Ensembl"/>
</dbReference>
<dbReference type="GO" id="GO:0035994">
    <property type="term" value="P:response to muscle stretch"/>
    <property type="evidence" value="ECO:0000314"/>
    <property type="project" value="MGI"/>
</dbReference>
<dbReference type="GO" id="GO:0048545">
    <property type="term" value="P:response to steroid hormone"/>
    <property type="evidence" value="ECO:0007669"/>
    <property type="project" value="Ensembl"/>
</dbReference>
<dbReference type="GO" id="GO:0009410">
    <property type="term" value="P:response to xenobiotic stimulus"/>
    <property type="evidence" value="ECO:0000314"/>
    <property type="project" value="MGI"/>
</dbReference>
<dbReference type="GO" id="GO:0060395">
    <property type="term" value="P:SMAD protein signal transduction"/>
    <property type="evidence" value="ECO:0007669"/>
    <property type="project" value="Ensembl"/>
</dbReference>
<dbReference type="GO" id="GO:0006366">
    <property type="term" value="P:transcription by RNA polymerase II"/>
    <property type="evidence" value="ECO:0007669"/>
    <property type="project" value="Ensembl"/>
</dbReference>
<dbReference type="GO" id="GO:0007179">
    <property type="term" value="P:transforming growth factor beta receptor signaling pathway"/>
    <property type="evidence" value="ECO:0007669"/>
    <property type="project" value="Ensembl"/>
</dbReference>
<dbReference type="CDD" id="cd14696">
    <property type="entry name" value="bZIP_Jun"/>
    <property type="match status" value="1"/>
</dbReference>
<dbReference type="FunFam" id="1.20.5.170:FF:000012">
    <property type="entry name" value="Putative transcription factor AP-1"/>
    <property type="match status" value="1"/>
</dbReference>
<dbReference type="Gene3D" id="1.20.5.170">
    <property type="match status" value="1"/>
</dbReference>
<dbReference type="InterPro" id="IPR050946">
    <property type="entry name" value="AP-1_TF_bZIP"/>
</dbReference>
<dbReference type="InterPro" id="IPR004827">
    <property type="entry name" value="bZIP"/>
</dbReference>
<dbReference type="InterPro" id="IPR046347">
    <property type="entry name" value="bZIP_sf"/>
</dbReference>
<dbReference type="InterPro" id="IPR005643">
    <property type="entry name" value="JNK"/>
</dbReference>
<dbReference type="InterPro" id="IPR002112">
    <property type="entry name" value="Leuzip_Jun"/>
</dbReference>
<dbReference type="InterPro" id="IPR008917">
    <property type="entry name" value="TF_DNA-bd_sf"/>
</dbReference>
<dbReference type="PANTHER" id="PTHR11462">
    <property type="entry name" value="JUN TRANSCRIPTION FACTOR-RELATED"/>
    <property type="match status" value="1"/>
</dbReference>
<dbReference type="PANTHER" id="PTHR11462:SF8">
    <property type="entry name" value="TRANSCRIPTION FACTOR JUN"/>
    <property type="match status" value="1"/>
</dbReference>
<dbReference type="Pfam" id="PF00170">
    <property type="entry name" value="bZIP_1"/>
    <property type="match status" value="1"/>
</dbReference>
<dbReference type="Pfam" id="PF03957">
    <property type="entry name" value="Jun"/>
    <property type="match status" value="1"/>
</dbReference>
<dbReference type="PRINTS" id="PR00043">
    <property type="entry name" value="LEUZIPPRJUN"/>
</dbReference>
<dbReference type="SMART" id="SM00338">
    <property type="entry name" value="BRLZ"/>
    <property type="match status" value="1"/>
</dbReference>
<dbReference type="SUPFAM" id="SSF47454">
    <property type="entry name" value="A DNA-binding domain in eukaryotic transcription factors"/>
    <property type="match status" value="1"/>
</dbReference>
<dbReference type="SUPFAM" id="SSF57959">
    <property type="entry name" value="Leucine zipper domain"/>
    <property type="match status" value="1"/>
</dbReference>
<dbReference type="PROSITE" id="PS50217">
    <property type="entry name" value="BZIP"/>
    <property type="match status" value="1"/>
</dbReference>
<dbReference type="PROSITE" id="PS00036">
    <property type="entry name" value="BZIP_BASIC"/>
    <property type="match status" value="1"/>
</dbReference>
<reference key="1">
    <citation type="journal article" date="1988" name="Nature">
        <title>Transcriptional activation of c-jun during the G0/G1 transition in mouse fibroblasts.</title>
        <authorList>
            <person name="Ryseck R.-P."/>
            <person name="Hirai S."/>
            <person name="Yaniv M."/>
            <person name="Bravo R."/>
        </authorList>
    </citation>
    <scope>NUCLEOTIDE SEQUENCE [MRNA]</scope>
</reference>
<reference key="2">
    <citation type="journal article" date="1988" name="Nature">
        <title>Induction of proto-oncogene JUN/AP-1 by serum and TPA.</title>
        <authorList>
            <person name="Lamph W.W."/>
            <person name="Wamsley P."/>
            <person name="Sassone-Corsi P."/>
            <person name="Verma I.M."/>
        </authorList>
    </citation>
    <scope>NUCLEOTIDE SEQUENCE [MRNA]</scope>
</reference>
<reference key="3">
    <citation type="journal article" date="1988" name="Proc. Natl. Acad. Sci. U.S.A.">
        <title>Induction of protooncogene c-jun by serum growth factors.</title>
        <authorList>
            <person name="Ryder K."/>
            <person name="Nathans D."/>
        </authorList>
    </citation>
    <scope>NUCLEOTIDE SEQUENCE [MRNA]</scope>
</reference>
<reference key="4">
    <citation type="journal article" date="2004" name="Genome Res.">
        <title>The status, quality, and expansion of the NIH full-length cDNA project: the Mammalian Gene Collection (MGC).</title>
        <authorList>
            <consortium name="The MGC Project Team"/>
        </authorList>
    </citation>
    <scope>NUCLEOTIDE SEQUENCE [LARGE SCALE MRNA]</scope>
    <source>
        <tissue>Mammary tumor</tissue>
    </source>
</reference>
<reference key="5">
    <citation type="journal article" date="1989" name="EMBO J.">
        <title>The product of a novel growth factor activated gene, fos B, interacts with JUN proteins enhancing their DNA binding activity.</title>
        <authorList>
            <person name="Zerial M."/>
            <person name="Toschi L."/>
            <person name="Ryseck R.-P."/>
            <person name="Schuermann M."/>
            <person name="Mueller R."/>
            <person name="Bravo R."/>
        </authorList>
    </citation>
    <scope>FUNCTION</scope>
    <scope>IDENTIFICATION IN AN AP-1 COMPLEX</scope>
    <scope>SUBUNIT</scope>
    <scope>INTERACTION WITH FOSB</scope>
</reference>
<reference key="6">
    <citation type="journal article" date="1998" name="Mol. Cell. Biol.">
        <title>Molecular cloning reveals that the p160 Myb-binding protein is a novel, predominantly nucleolar protein which may play a role in transactivation by Myb.</title>
        <authorList>
            <person name="Tavner F.J."/>
            <person name="Simpson R."/>
            <person name="Tashiro S."/>
            <person name="Favier D."/>
            <person name="Jenkins N.A."/>
            <person name="Gilbert D.J."/>
            <person name="Copeland N.G."/>
            <person name="Macmillan E.M."/>
            <person name="Lutwyche J."/>
            <person name="Keough R.A."/>
            <person name="Ishii S."/>
            <person name="Gonda T.J."/>
        </authorList>
    </citation>
    <scope>INTERACTION WITH MYBBP1A</scope>
</reference>
<reference key="7">
    <citation type="journal article" date="2001" name="J. Biol. Chem.">
        <title>Inhibition of AP-1 by the glucocorticoid-inducible protein GILZ.</title>
        <authorList>
            <person name="Mittelstadt P.R."/>
            <person name="Ashwell J.D."/>
        </authorList>
    </citation>
    <scope>INTERACTION WITH TSC22D3</scope>
</reference>
<reference key="8">
    <citation type="journal article" date="2002" name="J. Biol. Chem.">
        <title>Molecular cloning and characterization of CAPER, a novel coactivator of activating protein-1 and estrogen receptors.</title>
        <authorList>
            <person name="Jung D.-J."/>
            <person name="Na S.-Y."/>
            <person name="Na D.S."/>
            <person name="Lee J.W."/>
        </authorList>
    </citation>
    <scope>INTERACTION WITH RBM39</scope>
</reference>
<reference key="9">
    <citation type="journal article" date="2004" name="J. Exp. Med.">
        <title>Schnurri-3 (KRC) interacts with c-Jun to regulate the IL-2 gene in T cells.</title>
        <authorList>
            <person name="Oukka M."/>
            <person name="Wein M.N."/>
            <person name="Glimcher L.H."/>
        </authorList>
    </citation>
    <scope>INTERACTION WITH HIVEP3</scope>
    <scope>FUNCTION</scope>
</reference>
<reference key="10">
    <citation type="journal article" date="2007" name="Mol. Cell. Biol.">
        <title>Cyclic AMP stimulates SF-1-dependent CYP11A1 expression through homeodomain-interacting protein kinase 3-mediated Jun N-terminal kinase and c-Jun phosphorylation.</title>
        <authorList>
            <person name="Lan H.-C."/>
            <person name="Li H.-J."/>
            <person name="Lin G."/>
            <person name="Lai P.-Y."/>
            <person name="Chung B.-C."/>
        </authorList>
    </citation>
    <scope>FUNCTION</scope>
    <scope>PHOSPHORYLATION BY HIPK3</scope>
</reference>
<reference key="11">
    <citation type="journal article" date="2009" name="Immunity">
        <title>The phagosomal proteome in interferon-gamma-activated macrophages.</title>
        <authorList>
            <person name="Trost M."/>
            <person name="English L."/>
            <person name="Lemieux S."/>
            <person name="Courcelles M."/>
            <person name="Desjardins M."/>
            <person name="Thibault P."/>
        </authorList>
    </citation>
    <scope>PHOSPHORYLATION [LARGE SCALE ANALYSIS] AT SER-63</scope>
    <scope>IDENTIFICATION BY MASS SPECTROMETRY [LARGE SCALE ANALYSIS]</scope>
</reference>
<reference key="12">
    <citation type="journal article" date="2010" name="Cell">
        <title>A tissue-specific atlas of mouse protein phosphorylation and expression.</title>
        <authorList>
            <person name="Huttlin E.L."/>
            <person name="Jedrychowski M.P."/>
            <person name="Elias J.E."/>
            <person name="Goswami T."/>
            <person name="Rad R."/>
            <person name="Beausoleil S.A."/>
            <person name="Villen J."/>
            <person name="Haas W."/>
            <person name="Sowa M.E."/>
            <person name="Gygi S.P."/>
        </authorList>
    </citation>
    <scope>PHOSPHORYLATION [LARGE SCALE ANALYSIS] AT SER-58; SER-63; THR-242 AND SER-246</scope>
    <scope>IDENTIFICATION BY MASS SPECTROMETRY [LARGE SCALE ANALYSIS]</scope>
    <source>
        <tissue>Brain</tissue>
        <tissue>Heart</tissue>
        <tissue>Kidney</tissue>
        <tissue>Lung</tissue>
    </source>
</reference>
<reference key="13">
    <citation type="journal article" date="2010" name="Nat. Cell Biol.">
        <title>Identification of a co-activator that links growth factor signalling to c-Jun/AP-1 activation.</title>
        <authorList>
            <person name="Davies C.C."/>
            <person name="Chakraborty A."/>
            <person name="Cipriani F."/>
            <person name="Haigh K."/>
            <person name="Haigh J.J."/>
            <person name="Behrens A."/>
        </authorList>
    </citation>
    <scope>INTERACTION WITH RNF187</scope>
</reference>
<reference key="14">
    <citation type="journal article" date="2013" name="Mol. Cell">
        <title>SIRT5-mediated lysine desuccinylation impacts diverse metabolic pathways.</title>
        <authorList>
            <person name="Park J."/>
            <person name="Chen Y."/>
            <person name="Tishkoff D.X."/>
            <person name="Peng C."/>
            <person name="Tan M."/>
            <person name="Dai L."/>
            <person name="Xie Z."/>
            <person name="Zhang Y."/>
            <person name="Zwaans B.M."/>
            <person name="Skinner M.E."/>
            <person name="Lombard D.B."/>
            <person name="Zhao Y."/>
        </authorList>
    </citation>
    <scope>ACETYLATION [LARGE SCALE ANALYSIS] AT LYS-56</scope>
    <scope>IDENTIFICATION BY MASS SPECTROMETRY [LARGE SCALE ANALYSIS]</scope>
    <source>
        <tissue>Embryonic fibroblast</tissue>
    </source>
</reference>
<reference key="15">
    <citation type="journal article" date="2016" name="EMBO J.">
        <title>Synaptonuclear messenger PRR7 inhibits c-Jun ubiquitination and regulates NMDA-mediated excitotoxicity.</title>
        <authorList>
            <person name="Kravchick D.O."/>
            <person name="Karpova A."/>
            <person name="Hrdinka M."/>
            <person name="Lopez-Rojas J."/>
            <person name="Iacobas S."/>
            <person name="Carbonell A.U."/>
            <person name="Iacobas D.A."/>
            <person name="Kreutz M.R."/>
            <person name="Jordan B.A."/>
        </authorList>
    </citation>
    <scope>INTERACTION WITH PRR7</scope>
</reference>
<reference key="16">
    <citation type="journal article" date="2017" name="Mol. Cell">
        <title>AP-1 Transcription Factors and the BAF Complex Mediate Signal-Dependent Enhancer Selection.</title>
        <authorList>
            <person name="Vierbuchen T."/>
            <person name="Ling E."/>
            <person name="Cowley C.J."/>
            <person name="Couch C.H."/>
            <person name="Wang X."/>
            <person name="Harmin D.A."/>
            <person name="Roberts C.W.M."/>
            <person name="Greenberg M.E."/>
        </authorList>
    </citation>
    <scope>INTERACTION WITH FOS; FOSB; FOSL1 AND FOSL2</scope>
</reference>
<accession>P05627</accession>
<keyword id="KW-0007">Acetylation</keyword>
<keyword id="KW-0010">Activator</keyword>
<keyword id="KW-0238">DNA-binding</keyword>
<keyword id="KW-1017">Isopeptide bond</keyword>
<keyword id="KW-0539">Nucleus</keyword>
<keyword id="KW-0597">Phosphoprotein</keyword>
<keyword id="KW-0656">Proto-oncogene</keyword>
<keyword id="KW-1185">Reference proteome</keyword>
<keyword id="KW-0804">Transcription</keyword>
<keyword id="KW-0805">Transcription regulation</keyword>
<keyword id="KW-0832">Ubl conjugation</keyword>
<gene>
    <name type="primary">Jun</name>
</gene>
<evidence type="ECO:0000250" key="1"/>
<evidence type="ECO:0000250" key="2">
    <source>
        <dbReference type="UniProtKB" id="P05412"/>
    </source>
</evidence>
<evidence type="ECO:0000250" key="3">
    <source>
        <dbReference type="UniProtKB" id="P17325"/>
    </source>
</evidence>
<evidence type="ECO:0000255" key="4">
    <source>
        <dbReference type="PROSITE-ProRule" id="PRU00978"/>
    </source>
</evidence>
<evidence type="ECO:0000256" key="5">
    <source>
        <dbReference type="SAM" id="MobiDB-lite"/>
    </source>
</evidence>
<evidence type="ECO:0000269" key="6">
    <source>
    </source>
</evidence>
<evidence type="ECO:0000269" key="7">
    <source>
    </source>
</evidence>
<evidence type="ECO:0000269" key="8">
    <source>
    </source>
</evidence>
<evidence type="ECO:0000269" key="9">
    <source>
    </source>
</evidence>
<evidence type="ECO:0000269" key="10">
    <source>
    </source>
</evidence>
<evidence type="ECO:0000269" key="11">
    <source>
    </source>
</evidence>
<evidence type="ECO:0000269" key="12">
    <source>
    </source>
</evidence>
<evidence type="ECO:0000269" key="13">
    <source>
    </source>
</evidence>
<evidence type="ECO:0000269" key="14">
    <source>
    </source>
</evidence>
<evidence type="ECO:0000305" key="15"/>
<evidence type="ECO:0007744" key="16">
    <source>
    </source>
</evidence>
<evidence type="ECO:0007744" key="17">
    <source>
    </source>
</evidence>
<evidence type="ECO:0007744" key="18">
    <source>
    </source>
</evidence>
<protein>
    <recommendedName>
        <fullName evidence="15">Transcription factor Jun</fullName>
    </recommendedName>
    <alternativeName>
        <fullName>AH119</fullName>
    </alternativeName>
    <alternativeName>
        <fullName>Activator protein 1</fullName>
        <shortName>AP1</shortName>
    </alternativeName>
    <alternativeName>
        <fullName>Proto-oncogene c-Jun</fullName>
    </alternativeName>
    <alternativeName>
        <fullName evidence="15">Transcription factor AP-1 subunit Jun</fullName>
    </alternativeName>
    <alternativeName>
        <fullName>V-jun avian sarcoma virus 17 oncogene homolog</fullName>
        <shortName>Jun A</shortName>
    </alternativeName>
</protein>
<feature type="chain" id="PRO_0000076430" description="Transcription factor Jun">
    <location>
        <begin position="1"/>
        <end position="334"/>
    </location>
</feature>
<feature type="domain" description="bZIP" evidence="4">
    <location>
        <begin position="255"/>
        <end position="318"/>
    </location>
</feature>
<feature type="region of interest" description="Interaction with PAGE4" evidence="2">
    <location>
        <begin position="150"/>
        <end position="226"/>
    </location>
</feature>
<feature type="region of interest" description="Disordered" evidence="5">
    <location>
        <begin position="191"/>
        <end position="217"/>
    </location>
</feature>
<feature type="region of interest" description="Basic motif" evidence="4">
    <location>
        <begin position="255"/>
        <end position="282"/>
    </location>
</feature>
<feature type="region of interest" description="Leucine-zipper" evidence="4">
    <location>
        <begin position="283"/>
        <end position="311"/>
    </location>
</feature>
<feature type="compositionally biased region" description="Low complexity" evidence="5">
    <location>
        <begin position="191"/>
        <end position="206"/>
    </location>
</feature>
<feature type="site" description="Necessary for synergistic transcriptional activity with SMAD3" evidence="1">
    <location>
        <position position="275"/>
    </location>
</feature>
<feature type="modified residue" description="Phosphothreonine; by PAK2" evidence="2">
    <location>
        <position position="2"/>
    </location>
</feature>
<feature type="modified residue" description="Phosphothreonine; by PAK2" evidence="2">
    <location>
        <position position="8"/>
    </location>
</feature>
<feature type="modified residue" description="N6-acetyllysine; alternate" evidence="18">
    <location>
        <position position="56"/>
    </location>
</feature>
<feature type="modified residue" description="Phosphoserine" evidence="17">
    <location>
        <position position="58"/>
    </location>
</feature>
<feature type="modified residue" description="Phosphoserine" evidence="16 17">
    <location>
        <position position="63"/>
    </location>
</feature>
<feature type="modified residue" description="Phosphoserine; by MAPK8 and PLK3" evidence="2">
    <location>
        <position position="73"/>
    </location>
</feature>
<feature type="modified residue" description="Phosphothreonine; by PAK2" evidence="2">
    <location>
        <position position="89"/>
    </location>
</feature>
<feature type="modified residue" description="Phosphothreonine" evidence="2">
    <location>
        <position position="91"/>
    </location>
</feature>
<feature type="modified residue" description="Phosphothreonine; by PAK2" evidence="2">
    <location>
        <position position="93"/>
    </location>
</feature>
<feature type="modified residue" description="Phosphothreonine" evidence="17">
    <location>
        <position position="242"/>
    </location>
</feature>
<feature type="modified residue" description="Phosphoserine" evidence="17">
    <location>
        <position position="246"/>
    </location>
</feature>
<feature type="modified residue" description="Phosphoserine; by GSK3-beta" evidence="2">
    <location>
        <position position="252"/>
    </location>
</feature>
<feature type="modified residue" description="N6-acetyllysine" evidence="2">
    <location>
        <position position="274"/>
    </location>
</feature>
<feature type="modified residue" description="Phosphothreonine; by PAK2" evidence="2">
    <location>
        <position position="289"/>
    </location>
</feature>
<feature type="cross-link" description="Glycyl lysine isopeptide (Lys-Gly) (interchain with G-Cter in SUMO2)" evidence="2">
    <location>
        <position position="35"/>
    </location>
</feature>
<feature type="cross-link" description="Glycyl lysine isopeptide (Lys-Gly) (interchain with G-Cter in SUMO2)" evidence="2">
    <location>
        <position position="50"/>
    </location>
</feature>
<feature type="cross-link" description="Glycyl lysine isopeptide (Lys-Gly) (interchain with G-Cter in SUMO2); alternate" evidence="2">
    <location>
        <position position="56"/>
    </location>
</feature>
<feature type="cross-link" description="Glycyl lysine isopeptide (Lys-Gly) (interchain with G-Cter in SUMO2)" evidence="2">
    <location>
        <position position="70"/>
    </location>
</feature>
<feature type="cross-link" description="Glycyl lysine isopeptide (Lys-Gly) (interchain with G-Cter in SUMO2)" evidence="2">
    <location>
        <position position="229"/>
    </location>
</feature>
<feature type="sequence conflict" description="In Ref. 1; CAA31252." evidence="15" ref="1">
    <original>S</original>
    <variation>C</variation>
    <location>
        <position position="183"/>
    </location>
</feature>
<sequence length="334" mass="35944">MTAKMETTFYDDALNASFLQSESGAYGYSNPKILKQSMTLNLADPVGSLKPHLRAKNSDLLTSPDVGLLKLASPELERLIIQSSNGHITTTPTPTQFLCPKNVTDEQEGFAEGFVRALAELHSQNTLPSVTSAAQPVSGAGMVAPAVASVAGAGGGGGYSASLHSEPPVYANLSNFNPGALSSGGGAPSYGAAGLAFPSQPQQQQQPPQPPHHLPQQIPVQHPRLQALKEEPQTVPEMPGETPPLSPIDMESQERIKAERKRMRNRIAASKCRKRKLERIARLEEKVKTLKAQNSELASTANMLREQVAQLKQKVMNHVNSGCQLMLTQQLQTF</sequence>
<name>JUN_MOUSE</name>
<organism>
    <name type="scientific">Mus musculus</name>
    <name type="common">Mouse</name>
    <dbReference type="NCBI Taxonomy" id="10090"/>
    <lineage>
        <taxon>Eukaryota</taxon>
        <taxon>Metazoa</taxon>
        <taxon>Chordata</taxon>
        <taxon>Craniata</taxon>
        <taxon>Vertebrata</taxon>
        <taxon>Euteleostomi</taxon>
        <taxon>Mammalia</taxon>
        <taxon>Eutheria</taxon>
        <taxon>Euarchontoglires</taxon>
        <taxon>Glires</taxon>
        <taxon>Rodentia</taxon>
        <taxon>Myomorpha</taxon>
        <taxon>Muroidea</taxon>
        <taxon>Muridae</taxon>
        <taxon>Murinae</taxon>
        <taxon>Mus</taxon>
        <taxon>Mus</taxon>
    </lineage>
</organism>
<proteinExistence type="evidence at protein level"/>
<comment type="function">
    <text evidence="2 8 9 11">Transcription factor that recognizes and binds to the AP-1 consensus motif 5'-TGA[GC]TCA-3' (PubMed:14707112). Heterodimerizes with proteins of the FOS family to form an AP-1 transcription factor complex, thereby enhancing its DNA binding activity to the AP-1 consensus sequence 5'-TGA[GC]TCA-3' and enhancing its transcriptional activity (PubMed:2498083). Together with FOSB, plays a role in activation-induced cell death of T cells by binding to the AP-1 promoter site of FASLG/CD95L, and inducing its transcription in response to activation of the TCR/CD3 signaling pathway (By similarity). Promotes activity of NR5A1 when phosphorylated by HIPK3 leading to increased steroidogenic gene expression upon cAMP signaling pathway stimulation (PubMed:17210646). Involved in activated KRAS-mediated transcriptional activation of USP28 (By similarity). Binds to the USP28 promoter (By similarity).</text>
</comment>
<comment type="subunit">
    <text evidence="2 3 6 7 8 10 11 12 13 14">Heterodimer with either BATF3 or ATF7 (By similarity). Heterodimer with FOS (PubMed:29272704). Heterodimer with FOSB isoform 1 and 2 (PubMed:29272704). Component of an AP-1 transcription factor complex composed of JUN-FOS heterodimers (PubMed:2498083). As part of the AP-1 transcription factor complex, forms heterodimers with FOSB, thereby binding to the AP-1 consensus sequence and stimulating transcription (PubMed:2498083). The ATF7/JUN heterodimer is essential for ATF7 transactivation activity. Interacts with SP1, SPIB and TCF20. Interacts with COPS5; the interaction leads indirectly to its phosphorylation. Component of the SMAD3/SMAD4/JUN/FOS/complex which forms at the AP1 promoter site. The SMAD3/SMAD4 heterodimer acts synergistically with the JUN/FOS heterodimer to activate transcription in response to TGF-beta (By similarity). Interacts (via its basic DNA binding and leucine zipper domains) with SMAD3 (via an N-terminal domain); the interaction is required for TGF-beta-mediated transactivation of the SMAD3/SMAD4/JUN/FOS/complex (By similarity). Interacts with TSC22D3 (via N-terminus); the interaction inhibits the binding of active AP1 to its target DNA (PubMed:11397794). Interacts with HIVEP3 and MYBBP1A (PubMed:14707112, PubMed:9447996). Interacts with methylated RNF187 (PubMed:20852630). Binds to HIPK3. Interacts (when phosphorylated) with FBXW7 (By similarity). Interacts with PRR7 (PubMed:27458189). Found in a complex with PRR7 and FBXW7 (By similarity). Interacts with PRR7 and FBXW7; the interaction inhibits ubiquitination-mediated JUN degradation promoting its phosphorylation and transcriptional activity (By similarity). Interacts with RBM39 (PubMed:11704680). Interacts with PAGE4 (By similarity). Interacts with FOSL1 and FOSL2 (PubMed:29272704). Interacts with ARK2N and CSNK2B; the interaction with ARK2N is mediated by CSNK2B (By similarity).</text>
</comment>
<comment type="interaction">
    <interactant intactId="EBI-764369">
        <id>P05627</id>
    </interactant>
    <interactant intactId="EBI-847380">
        <id>Q64261</id>
        <label>Cdk6</label>
    </interactant>
    <organismsDiffer>false</organismsDiffer>
    <experiments>2</experiments>
</comment>
<comment type="interaction">
    <interactant intactId="EBI-764369">
        <id>P05627</id>
    </interactant>
    <interactant intactId="EBI-298784">
        <id>Q91Y86</id>
        <label>Mapk8</label>
    </interactant>
    <organismsDiffer>false</organismsDiffer>
    <experiments>2</experiments>
</comment>
<comment type="interaction">
    <interactant intactId="EBI-764369">
        <id>P05627</id>
    </interactant>
    <interactant intactId="EBI-78473">
        <id>P03372</id>
        <label>ESR1</label>
    </interactant>
    <organismsDiffer>true</organismsDiffer>
    <experiments>6</experiments>
</comment>
<comment type="subcellular location">
    <subcellularLocation>
        <location evidence="2">Nucleus</location>
    </subcellularLocation>
</comment>
<comment type="PTM">
    <text evidence="2">Phosphorylated by CaMK4 and PRKDC; phosphorylation enhances the transcriptional activity. Phosphorylated by HIPK3. Phosphorylated by DYRK2 at Ser-246; this primes the protein for subsequent phosphorylation by GSK3B at Thr-242. Phosphorylated at Thr-242, Ser-246 and Ser-252 by GSK3B; phosphorylation reduces its ability to bind DNA. Phosphorylated by PAK2 at Thr-2, Thr-8, Thr-89, Thr-93 and Thr-289 thereby promoting JUN-mediated cell proliferation and transformation. Phosphorylated by PLK3 following hypoxia or UV irradiation, leading to increase DNA-binding activity (By similarity). Phosphorylated by VRK1 (By similarity).</text>
</comment>
<comment type="PTM">
    <text evidence="2">Ubiquitinated by the SCF(FBXW7), leading to its degradation. Ubiquitination takes place following phosphorylation, that promotes interaction with FBXW7.</text>
</comment>
<comment type="PTM">
    <text evidence="2">Acetylated at Lys-271 by EP300.</text>
</comment>
<comment type="similarity">
    <text evidence="15">Belongs to the bZIP family. Jun subfamily.</text>
</comment>